<dbReference type="EMBL" id="AE000782">
    <property type="protein sequence ID" value="AAB89674.1"/>
    <property type="molecule type" value="Genomic_DNA"/>
</dbReference>
<dbReference type="PIR" id="E69445">
    <property type="entry name" value="E69445"/>
</dbReference>
<dbReference type="STRING" id="224325.AF_1566"/>
<dbReference type="PaxDb" id="224325-AF_1566"/>
<dbReference type="EnsemblBacteria" id="AAB89674">
    <property type="protein sequence ID" value="AAB89674"/>
    <property type="gene ID" value="AF_1566"/>
</dbReference>
<dbReference type="KEGG" id="afu:AF_1566"/>
<dbReference type="eggNOG" id="arCOG06133">
    <property type="taxonomic scope" value="Archaea"/>
</dbReference>
<dbReference type="HOGENOM" id="CLU_1092387_0_0_2"/>
<dbReference type="OrthoDB" id="371941at2157"/>
<dbReference type="Proteomes" id="UP000002199">
    <property type="component" value="Chromosome"/>
</dbReference>
<dbReference type="InterPro" id="IPR045926">
    <property type="entry name" value="DUF6345"/>
</dbReference>
<dbReference type="Pfam" id="PF19872">
    <property type="entry name" value="DUF6345"/>
    <property type="match status" value="1"/>
</dbReference>
<protein>
    <recommendedName>
        <fullName>Uncharacterized protein AF_1566</fullName>
    </recommendedName>
</protein>
<feature type="chain" id="PRO_0000128024" description="Uncharacterized protein AF_1566">
    <location>
        <begin position="1"/>
        <end position="263"/>
    </location>
</feature>
<keyword id="KW-1185">Reference proteome</keyword>
<gene>
    <name type="ordered locus">AF_1566</name>
</gene>
<organism>
    <name type="scientific">Archaeoglobus fulgidus (strain ATCC 49558 / DSM 4304 / JCM 9628 / NBRC 100126 / VC-16)</name>
    <dbReference type="NCBI Taxonomy" id="224325"/>
    <lineage>
        <taxon>Archaea</taxon>
        <taxon>Methanobacteriati</taxon>
        <taxon>Methanobacteriota</taxon>
        <taxon>Archaeoglobi</taxon>
        <taxon>Archaeoglobales</taxon>
        <taxon>Archaeoglobaceae</taxon>
        <taxon>Archaeoglobus</taxon>
    </lineage>
</organism>
<accession>O28706</accession>
<name>Y1566_ARCFU</name>
<sequence length="263" mass="29177">MYRFNGGGSMKHSIMVWVYVCLAAFTLAGKTLAYDVGAAVAFSEDPEDVWFNSVSQFVEIISSEPTWVQHFLNDYPNVGPYMWTEEEKGNDNFYADYTELSLVLGHGVVVVYPDGTKKSAIGFADRGYALPDDIRLGYASPDGFGYSVWTFIIQCSVLGDEYVDDWLQTLQGVHMVLGFASTATISNADFPELAYRLTGTGGYTREKVESAFFSTFLKSDGVHDDNRARIIAENSEVLDNDYLNSFERVPVDGSKIIVTGWVG</sequence>
<reference key="1">
    <citation type="journal article" date="1997" name="Nature">
        <title>The complete genome sequence of the hyperthermophilic, sulphate-reducing archaeon Archaeoglobus fulgidus.</title>
        <authorList>
            <person name="Klenk H.-P."/>
            <person name="Clayton R.A."/>
            <person name="Tomb J.-F."/>
            <person name="White O."/>
            <person name="Nelson K.E."/>
            <person name="Ketchum K.A."/>
            <person name="Dodson R.J."/>
            <person name="Gwinn M.L."/>
            <person name="Hickey E.K."/>
            <person name="Peterson J.D."/>
            <person name="Richardson D.L."/>
            <person name="Kerlavage A.R."/>
            <person name="Graham D.E."/>
            <person name="Kyrpides N.C."/>
            <person name="Fleischmann R.D."/>
            <person name="Quackenbush J."/>
            <person name="Lee N.H."/>
            <person name="Sutton G.G."/>
            <person name="Gill S.R."/>
            <person name="Kirkness E.F."/>
            <person name="Dougherty B.A."/>
            <person name="McKenney K."/>
            <person name="Adams M.D."/>
            <person name="Loftus B.J."/>
            <person name="Peterson S.N."/>
            <person name="Reich C.I."/>
            <person name="McNeil L.K."/>
            <person name="Badger J.H."/>
            <person name="Glodek A."/>
            <person name="Zhou L."/>
            <person name="Overbeek R."/>
            <person name="Gocayne J.D."/>
            <person name="Weidman J.F."/>
            <person name="McDonald L.A."/>
            <person name="Utterback T.R."/>
            <person name="Cotton M.D."/>
            <person name="Spriggs T."/>
            <person name="Artiach P."/>
            <person name="Kaine B.P."/>
            <person name="Sykes S.M."/>
            <person name="Sadow P.W."/>
            <person name="D'Andrea K.P."/>
            <person name="Bowman C."/>
            <person name="Fujii C."/>
            <person name="Garland S.A."/>
            <person name="Mason T.M."/>
            <person name="Olsen G.J."/>
            <person name="Fraser C.M."/>
            <person name="Smith H.O."/>
            <person name="Woese C.R."/>
            <person name="Venter J.C."/>
        </authorList>
    </citation>
    <scope>NUCLEOTIDE SEQUENCE [LARGE SCALE GENOMIC DNA]</scope>
    <source>
        <strain>ATCC 49558 / DSM 4304 / JCM 9628 / NBRC 100126 / VC-16</strain>
    </source>
</reference>
<proteinExistence type="predicted"/>